<keyword id="KW-0067">ATP-binding</keyword>
<keyword id="KW-0378">Hydrolase</keyword>
<keyword id="KW-0547">Nucleotide-binding</keyword>
<keyword id="KW-1185">Reference proteome</keyword>
<organism>
    <name type="scientific">Methanopyrus kandleri (strain AV19 / DSM 6324 / JCM 9639 / NBRC 100938)</name>
    <dbReference type="NCBI Taxonomy" id="190192"/>
    <lineage>
        <taxon>Archaea</taxon>
        <taxon>Methanobacteriati</taxon>
        <taxon>Methanobacteriota</taxon>
        <taxon>Methanomada group</taxon>
        <taxon>Methanopyri</taxon>
        <taxon>Methanopyrales</taxon>
        <taxon>Methanopyraceae</taxon>
        <taxon>Methanopyrus</taxon>
    </lineage>
</organism>
<name>NTPTH_METKA</name>
<accession>Q8TX49</accession>
<proteinExistence type="inferred from homology"/>
<reference key="1">
    <citation type="journal article" date="2002" name="Proc. Natl. Acad. Sci. U.S.A.">
        <title>The complete genome of hyperthermophile Methanopyrus kandleri AV19 and monophyly of archaeal methanogens.</title>
        <authorList>
            <person name="Slesarev A.I."/>
            <person name="Mezhevaya K.V."/>
            <person name="Makarova K.S."/>
            <person name="Polushin N.N."/>
            <person name="Shcherbinina O.V."/>
            <person name="Shakhova V.V."/>
            <person name="Belova G.I."/>
            <person name="Aravind L."/>
            <person name="Natale D.A."/>
            <person name="Rogozin I.B."/>
            <person name="Tatusov R.L."/>
            <person name="Wolf Y.I."/>
            <person name="Stetter K.O."/>
            <person name="Malykh A.G."/>
            <person name="Koonin E.V."/>
            <person name="Kozyavkin S.A."/>
        </authorList>
    </citation>
    <scope>NUCLEOTIDE SEQUENCE [LARGE SCALE GENOMIC DNA]</scope>
    <source>
        <strain>AV19 / DSM 6324 / JCM 9639 / NBRC 100938</strain>
    </source>
</reference>
<dbReference type="EC" id="3.6.1.15" evidence="1"/>
<dbReference type="EMBL" id="AE009439">
    <property type="protein sequence ID" value="AAM02040.1"/>
    <property type="molecule type" value="Genomic_DNA"/>
</dbReference>
<dbReference type="RefSeq" id="WP_011019195.1">
    <property type="nucleotide sequence ID" value="NC_003551.1"/>
</dbReference>
<dbReference type="SMR" id="Q8TX49"/>
<dbReference type="FunCoup" id="Q8TX49">
    <property type="interactions" value="89"/>
</dbReference>
<dbReference type="STRING" id="190192.MK0827"/>
<dbReference type="PaxDb" id="190192-MK0827"/>
<dbReference type="EnsemblBacteria" id="AAM02040">
    <property type="protein sequence ID" value="AAM02040"/>
    <property type="gene ID" value="MK0827"/>
</dbReference>
<dbReference type="GeneID" id="1476928"/>
<dbReference type="KEGG" id="mka:MK0827"/>
<dbReference type="PATRIC" id="fig|190192.8.peg.869"/>
<dbReference type="HOGENOM" id="CLU_103145_1_1_2"/>
<dbReference type="InParanoid" id="Q8TX49"/>
<dbReference type="OrthoDB" id="52698at2157"/>
<dbReference type="Proteomes" id="UP000001826">
    <property type="component" value="Chromosome"/>
</dbReference>
<dbReference type="GO" id="GO:0005524">
    <property type="term" value="F:ATP binding"/>
    <property type="evidence" value="ECO:0007669"/>
    <property type="project" value="UniProtKB-UniRule"/>
</dbReference>
<dbReference type="GO" id="GO:0016887">
    <property type="term" value="F:ATP hydrolysis activity"/>
    <property type="evidence" value="ECO:0007669"/>
    <property type="project" value="InterPro"/>
</dbReference>
<dbReference type="CDD" id="cd19482">
    <property type="entry name" value="RecA-like_Thep1"/>
    <property type="match status" value="1"/>
</dbReference>
<dbReference type="Gene3D" id="3.40.50.300">
    <property type="entry name" value="P-loop containing nucleotide triphosphate hydrolases"/>
    <property type="match status" value="1"/>
</dbReference>
<dbReference type="HAMAP" id="MF_00796">
    <property type="entry name" value="NTPase_1"/>
    <property type="match status" value="1"/>
</dbReference>
<dbReference type="InterPro" id="IPR003593">
    <property type="entry name" value="AAA+_ATPase"/>
</dbReference>
<dbReference type="InterPro" id="IPR004948">
    <property type="entry name" value="Nuc-triphosphatase_THEP1"/>
</dbReference>
<dbReference type="InterPro" id="IPR027417">
    <property type="entry name" value="P-loop_NTPase"/>
</dbReference>
<dbReference type="NCBIfam" id="NF010248">
    <property type="entry name" value="PRK13695.1"/>
    <property type="match status" value="1"/>
</dbReference>
<dbReference type="PANTHER" id="PTHR43146">
    <property type="entry name" value="CANCER-RELATED NUCLEOSIDE-TRIPHOSPHATASE"/>
    <property type="match status" value="1"/>
</dbReference>
<dbReference type="PANTHER" id="PTHR43146:SF1">
    <property type="entry name" value="CANCER-RELATED NUCLEOSIDE-TRIPHOSPHATASE"/>
    <property type="match status" value="1"/>
</dbReference>
<dbReference type="Pfam" id="PF03266">
    <property type="entry name" value="NTPase_1"/>
    <property type="match status" value="1"/>
</dbReference>
<dbReference type="SMART" id="SM00382">
    <property type="entry name" value="AAA"/>
    <property type="match status" value="1"/>
</dbReference>
<dbReference type="SUPFAM" id="SSF52540">
    <property type="entry name" value="P-loop containing nucleoside triphosphate hydrolases"/>
    <property type="match status" value="1"/>
</dbReference>
<feature type="chain" id="PRO_0000146697" description="Nucleoside-triphosphatase THEP1">
    <location>
        <begin position="1"/>
        <end position="180"/>
    </location>
</feature>
<feature type="binding site" evidence="1">
    <location>
        <begin position="9"/>
        <end position="16"/>
    </location>
    <ligand>
        <name>ATP</name>
        <dbReference type="ChEBI" id="CHEBI:30616"/>
    </ligand>
</feature>
<feature type="binding site" evidence="1">
    <location>
        <begin position="99"/>
        <end position="106"/>
    </location>
    <ligand>
        <name>ATP</name>
        <dbReference type="ChEBI" id="CHEBI:30616"/>
    </ligand>
</feature>
<evidence type="ECO:0000255" key="1">
    <source>
        <dbReference type="HAMAP-Rule" id="MF_00796"/>
    </source>
</evidence>
<sequence length="180" mass="20326">MPHNVVLTGRPGIGKTTVCLKVRNVLEEEGYTVGGIYCPEIREGGRRIGFEIVDLTEGDRYLLAREGASGPRVGRYGVFVDNLERAAESIERAVKRTDVVIVDEVGPMELKSNAFVDAVRRAADAHTPAIFVVHERSRHPVVVDLREERPDVVRFRVTLSNRDELSDRILEHVLEWLEER</sequence>
<comment type="function">
    <text evidence="1">Has nucleotide phosphatase activity towards ATP, GTP, CTP, TTP and UTP. May hydrolyze nucleoside diphosphates with lower efficiency.</text>
</comment>
<comment type="catalytic activity">
    <reaction evidence="1">
        <text>a ribonucleoside 5'-triphosphate + H2O = a ribonucleoside 5'-diphosphate + phosphate + H(+)</text>
        <dbReference type="Rhea" id="RHEA:23680"/>
        <dbReference type="ChEBI" id="CHEBI:15377"/>
        <dbReference type="ChEBI" id="CHEBI:15378"/>
        <dbReference type="ChEBI" id="CHEBI:43474"/>
        <dbReference type="ChEBI" id="CHEBI:57930"/>
        <dbReference type="ChEBI" id="CHEBI:61557"/>
        <dbReference type="EC" id="3.6.1.15"/>
    </reaction>
</comment>
<comment type="similarity">
    <text evidence="1">Belongs to the THEP1 NTPase family.</text>
</comment>
<gene>
    <name type="ordered locus">MK0827</name>
</gene>
<protein>
    <recommendedName>
        <fullName evidence="1">Nucleoside-triphosphatase THEP1</fullName>
        <shortName evidence="1">NTPase THEP1</shortName>
        <ecNumber evidence="1">3.6.1.15</ecNumber>
    </recommendedName>
    <alternativeName>
        <fullName evidence="1">Nucleoside triphosphate phosphohydrolase</fullName>
    </alternativeName>
</protein>